<accession>Q8BGN6</accession>
<accession>Q8BM25</accession>
<organism>
    <name type="scientific">Mus musculus</name>
    <name type="common">Mouse</name>
    <dbReference type="NCBI Taxonomy" id="10090"/>
    <lineage>
        <taxon>Eukaryota</taxon>
        <taxon>Metazoa</taxon>
        <taxon>Chordata</taxon>
        <taxon>Craniata</taxon>
        <taxon>Vertebrata</taxon>
        <taxon>Euteleostomi</taxon>
        <taxon>Mammalia</taxon>
        <taxon>Eutheria</taxon>
        <taxon>Euarchontoglires</taxon>
        <taxon>Glires</taxon>
        <taxon>Rodentia</taxon>
        <taxon>Myomorpha</taxon>
        <taxon>Muroidea</taxon>
        <taxon>Muridae</taxon>
        <taxon>Murinae</taxon>
        <taxon>Mus</taxon>
        <taxon>Mus</taxon>
    </lineage>
</organism>
<comment type="function">
    <text evidence="1">May control axon guidance across the CNS (By similarity). Prevents the delivery of ROBO1 at the cell surface and down-regulates its expression (By similarity).</text>
</comment>
<comment type="subunit">
    <text evidence="1">Interacts (via cytoplasmic domain) with WW domain-containing proteins MAGI1, MAGI3, NEDD4, NEDD4L, WWTR1/TAZ and YAP1.</text>
</comment>
<comment type="subcellular location">
    <subcellularLocation>
        <location evidence="1">Endoplasmic reticulum-Golgi intermediate compartment membrane</location>
        <topology evidence="2">Single-pass type I membrane protein</topology>
    </subcellularLocation>
    <subcellularLocation>
        <location evidence="1">Cell membrane</location>
        <topology evidence="2">Single-pass type I membrane protein</topology>
    </subcellularLocation>
</comment>
<comment type="PTM">
    <text evidence="3">Gamma-carboxyglutamate residues are formed by vitamin K dependent carboxylation. These residues are essential for the binding of calcium.</text>
</comment>
<comment type="similarity">
    <text evidence="4">Belongs to the commissureless family.</text>
</comment>
<proteinExistence type="evidence at transcript level"/>
<protein>
    <recommendedName>
        <fullName>Transmembrane gamma-carboxyglutamic acid protein 4</fullName>
    </recommendedName>
    <alternativeName>
        <fullName>Proline-rich gamma-carboxyglutamic acid protein 4</fullName>
        <shortName>Proline-rich Gla protein 4</shortName>
    </alternativeName>
</protein>
<feature type="signal peptide" evidence="2">
    <location>
        <begin position="1"/>
        <end position="17"/>
    </location>
</feature>
<feature type="propeptide" id="PRO_0000022553" evidence="2">
    <location>
        <begin position="18"/>
        <end position="49"/>
    </location>
</feature>
<feature type="chain" id="PRO_0000022554" description="Transmembrane gamma-carboxyglutamic acid protein 4">
    <location>
        <begin position="50"/>
        <end position="226"/>
    </location>
</feature>
<feature type="topological domain" description="Extracellular" evidence="2">
    <location>
        <begin position="50"/>
        <end position="113"/>
    </location>
</feature>
<feature type="transmembrane region" description="Helical" evidence="2">
    <location>
        <begin position="114"/>
        <end position="134"/>
    </location>
</feature>
<feature type="topological domain" description="Cytoplasmic" evidence="2">
    <location>
        <begin position="135"/>
        <end position="226"/>
    </location>
</feature>
<feature type="domain" description="Gla" evidence="3">
    <location>
        <begin position="52"/>
        <end position="98"/>
    </location>
</feature>
<feature type="short sequence motif" description="LPXY motif; mediates binding to WW domain-containing proteins" evidence="1">
    <location>
        <begin position="186"/>
        <end position="189"/>
    </location>
</feature>
<feature type="short sequence motif" description="PPXY motif; mediates binding to WW domain-containing proteins" evidence="1">
    <location>
        <begin position="204"/>
        <end position="207"/>
    </location>
</feature>
<feature type="modified residue" description="4-carboxyglutamate" evidence="3">
    <location>
        <position position="72"/>
    </location>
</feature>
<feature type="modified residue" description="Phosphoserine" evidence="1">
    <location>
        <position position="164"/>
    </location>
</feature>
<feature type="disulfide bond" evidence="3">
    <location>
        <begin position="69"/>
        <end position="74"/>
    </location>
</feature>
<feature type="sequence conflict" description="In Ref. 1; BAC29092." evidence="4" ref="1">
    <original>C</original>
    <variation>Y</variation>
    <location>
        <position position="21"/>
    </location>
</feature>
<evidence type="ECO:0000250" key="1">
    <source>
        <dbReference type="UniProtKB" id="Q9BZD6"/>
    </source>
</evidence>
<evidence type="ECO:0000255" key="2"/>
<evidence type="ECO:0000255" key="3">
    <source>
        <dbReference type="PROSITE-ProRule" id="PRU00463"/>
    </source>
</evidence>
<evidence type="ECO:0000305" key="4"/>
<gene>
    <name type="primary">Prrg4</name>
    <name type="synonym">Prgp4</name>
    <name type="synonym">Tmg4</name>
</gene>
<sequence length="226" mass="25401">MFPLLIVLSQLPRLTLAVPHCIRSLKDSEHAPEEVFASKEAANIFMHRRLLNNRFDLELFTPGDLERECYEEFCSYEEAREILGDDENTIKFWQTYSIKGPTTGSDVNKEKIDVMSLLTGLIVAGVFLVIFGLVGYYVCLTKCKRRPYPSSSANYTRTARYTPSIVFRSPEEAVLSPSTSSEDAGLPSYEQAVALTRKHSVSPPPPYPGPARGFRVFKKSMSLPSH</sequence>
<name>TMG4_MOUSE</name>
<dbReference type="EMBL" id="AK035530">
    <property type="protein sequence ID" value="BAC29092.1"/>
    <property type="molecule type" value="mRNA"/>
</dbReference>
<dbReference type="EMBL" id="AK037087">
    <property type="protein sequence ID" value="BAC29697.1"/>
    <property type="molecule type" value="mRNA"/>
</dbReference>
<dbReference type="EMBL" id="AK038703">
    <property type="protein sequence ID" value="BAC30106.1"/>
    <property type="molecule type" value="mRNA"/>
</dbReference>
<dbReference type="CCDS" id="CCDS16493.1"/>
<dbReference type="RefSeq" id="NP_848810.3">
    <property type="nucleotide sequence ID" value="NM_178695.5"/>
</dbReference>
<dbReference type="RefSeq" id="XP_030106194.1">
    <property type="nucleotide sequence ID" value="XM_030250334.2"/>
</dbReference>
<dbReference type="SMR" id="Q8BGN6"/>
<dbReference type="BioGRID" id="230732">
    <property type="interactions" value="1"/>
</dbReference>
<dbReference type="FunCoup" id="Q8BGN6">
    <property type="interactions" value="351"/>
</dbReference>
<dbReference type="STRING" id="10090.ENSMUSP00000028593"/>
<dbReference type="iPTMnet" id="Q8BGN6"/>
<dbReference type="PhosphoSitePlus" id="Q8BGN6"/>
<dbReference type="jPOST" id="Q8BGN6"/>
<dbReference type="PaxDb" id="10090-ENSMUSP00000028593"/>
<dbReference type="ProteomicsDB" id="259129"/>
<dbReference type="Antibodypedia" id="2457">
    <property type="antibodies" value="36 antibodies from 12 providers"/>
</dbReference>
<dbReference type="DNASU" id="228413"/>
<dbReference type="Ensembl" id="ENSMUST00000028593.11">
    <property type="protein sequence ID" value="ENSMUSP00000028593.5"/>
    <property type="gene ID" value="ENSMUSG00000027171.11"/>
</dbReference>
<dbReference type="GeneID" id="228413"/>
<dbReference type="KEGG" id="mmu:228413"/>
<dbReference type="UCSC" id="uc008lkh.1">
    <property type="organism name" value="mouse"/>
</dbReference>
<dbReference type="AGR" id="MGI:2442211"/>
<dbReference type="CTD" id="79056"/>
<dbReference type="MGI" id="MGI:2442211">
    <property type="gene designation" value="Prrg4"/>
</dbReference>
<dbReference type="VEuPathDB" id="HostDB:ENSMUSG00000027171"/>
<dbReference type="eggNOG" id="ENOG502S0JP">
    <property type="taxonomic scope" value="Eukaryota"/>
</dbReference>
<dbReference type="GeneTree" id="ENSGT00940000158268"/>
<dbReference type="HOGENOM" id="CLU_084796_0_0_1"/>
<dbReference type="InParanoid" id="Q8BGN6"/>
<dbReference type="OMA" id="WKDVFTS"/>
<dbReference type="OrthoDB" id="9945709at2759"/>
<dbReference type="PhylomeDB" id="Q8BGN6"/>
<dbReference type="TreeFam" id="TF332123"/>
<dbReference type="BioGRID-ORCS" id="228413">
    <property type="hits" value="4 hits in 77 CRISPR screens"/>
</dbReference>
<dbReference type="ChiTaRS" id="Prrg4">
    <property type="organism name" value="mouse"/>
</dbReference>
<dbReference type="PRO" id="PR:Q8BGN6"/>
<dbReference type="Proteomes" id="UP000000589">
    <property type="component" value="Chromosome 2"/>
</dbReference>
<dbReference type="RNAct" id="Q8BGN6">
    <property type="molecule type" value="protein"/>
</dbReference>
<dbReference type="Bgee" id="ENSMUSG00000027171">
    <property type="expression patterns" value="Expressed in ectoplacental cone and 93 other cell types or tissues"/>
</dbReference>
<dbReference type="ExpressionAtlas" id="Q8BGN6">
    <property type="expression patterns" value="baseline and differential"/>
</dbReference>
<dbReference type="GO" id="GO:0033116">
    <property type="term" value="C:endoplasmic reticulum-Golgi intermediate compartment membrane"/>
    <property type="evidence" value="ECO:0007669"/>
    <property type="project" value="UniProtKB-SubCell"/>
</dbReference>
<dbReference type="GO" id="GO:0005576">
    <property type="term" value="C:extracellular region"/>
    <property type="evidence" value="ECO:0007669"/>
    <property type="project" value="InterPro"/>
</dbReference>
<dbReference type="GO" id="GO:0005886">
    <property type="term" value="C:plasma membrane"/>
    <property type="evidence" value="ECO:0000250"/>
    <property type="project" value="UniProtKB"/>
</dbReference>
<dbReference type="GO" id="GO:0005509">
    <property type="term" value="F:calcium ion binding"/>
    <property type="evidence" value="ECO:0007669"/>
    <property type="project" value="InterPro"/>
</dbReference>
<dbReference type="GO" id="GO:0050699">
    <property type="term" value="F:WW domain binding"/>
    <property type="evidence" value="ECO:0000250"/>
    <property type="project" value="UniProtKB"/>
</dbReference>
<dbReference type="FunFam" id="4.10.740.10:FF:000001">
    <property type="entry name" value="vitamin K-dependent protein S"/>
    <property type="match status" value="1"/>
</dbReference>
<dbReference type="Gene3D" id="4.10.740.10">
    <property type="entry name" value="Coagulation Factor IX"/>
    <property type="match status" value="1"/>
</dbReference>
<dbReference type="InterPro" id="IPR017857">
    <property type="entry name" value="Coagulation_fac-like_Gla_dom"/>
</dbReference>
<dbReference type="InterPro" id="IPR035972">
    <property type="entry name" value="GLA-like_dom_SF"/>
</dbReference>
<dbReference type="InterPro" id="IPR000294">
    <property type="entry name" value="GLA_domain"/>
</dbReference>
<dbReference type="InterPro" id="IPR050442">
    <property type="entry name" value="Peptidase_S1_coag_factors"/>
</dbReference>
<dbReference type="PANTHER" id="PTHR24278">
    <property type="entry name" value="COAGULATION FACTOR"/>
    <property type="match status" value="1"/>
</dbReference>
<dbReference type="PANTHER" id="PTHR24278:SF38">
    <property type="entry name" value="TRANSMEMBRANE GAMMA-CARBOXYGLUTAMIC ACID PROTEIN 4"/>
    <property type="match status" value="1"/>
</dbReference>
<dbReference type="Pfam" id="PF00594">
    <property type="entry name" value="Gla"/>
    <property type="match status" value="1"/>
</dbReference>
<dbReference type="PRINTS" id="PR00001">
    <property type="entry name" value="GLABLOOD"/>
</dbReference>
<dbReference type="SMART" id="SM00069">
    <property type="entry name" value="GLA"/>
    <property type="match status" value="1"/>
</dbReference>
<dbReference type="SUPFAM" id="SSF57630">
    <property type="entry name" value="GLA-domain"/>
    <property type="match status" value="1"/>
</dbReference>
<dbReference type="PROSITE" id="PS00011">
    <property type="entry name" value="GLA_1"/>
    <property type="match status" value="1"/>
</dbReference>
<dbReference type="PROSITE" id="PS50998">
    <property type="entry name" value="GLA_2"/>
    <property type="match status" value="1"/>
</dbReference>
<reference key="1">
    <citation type="journal article" date="2005" name="Science">
        <title>The transcriptional landscape of the mammalian genome.</title>
        <authorList>
            <person name="Carninci P."/>
            <person name="Kasukawa T."/>
            <person name="Katayama S."/>
            <person name="Gough J."/>
            <person name="Frith M.C."/>
            <person name="Maeda N."/>
            <person name="Oyama R."/>
            <person name="Ravasi T."/>
            <person name="Lenhard B."/>
            <person name="Wells C."/>
            <person name="Kodzius R."/>
            <person name="Shimokawa K."/>
            <person name="Bajic V.B."/>
            <person name="Brenner S.E."/>
            <person name="Batalov S."/>
            <person name="Forrest A.R."/>
            <person name="Zavolan M."/>
            <person name="Davis M.J."/>
            <person name="Wilming L.G."/>
            <person name="Aidinis V."/>
            <person name="Allen J.E."/>
            <person name="Ambesi-Impiombato A."/>
            <person name="Apweiler R."/>
            <person name="Aturaliya R.N."/>
            <person name="Bailey T.L."/>
            <person name="Bansal M."/>
            <person name="Baxter L."/>
            <person name="Beisel K.W."/>
            <person name="Bersano T."/>
            <person name="Bono H."/>
            <person name="Chalk A.M."/>
            <person name="Chiu K.P."/>
            <person name="Choudhary V."/>
            <person name="Christoffels A."/>
            <person name="Clutterbuck D.R."/>
            <person name="Crowe M.L."/>
            <person name="Dalla E."/>
            <person name="Dalrymple B.P."/>
            <person name="de Bono B."/>
            <person name="Della Gatta G."/>
            <person name="di Bernardo D."/>
            <person name="Down T."/>
            <person name="Engstrom P."/>
            <person name="Fagiolini M."/>
            <person name="Faulkner G."/>
            <person name="Fletcher C.F."/>
            <person name="Fukushima T."/>
            <person name="Furuno M."/>
            <person name="Futaki S."/>
            <person name="Gariboldi M."/>
            <person name="Georgii-Hemming P."/>
            <person name="Gingeras T.R."/>
            <person name="Gojobori T."/>
            <person name="Green R.E."/>
            <person name="Gustincich S."/>
            <person name="Harbers M."/>
            <person name="Hayashi Y."/>
            <person name="Hensch T.K."/>
            <person name="Hirokawa N."/>
            <person name="Hill D."/>
            <person name="Huminiecki L."/>
            <person name="Iacono M."/>
            <person name="Ikeo K."/>
            <person name="Iwama A."/>
            <person name="Ishikawa T."/>
            <person name="Jakt M."/>
            <person name="Kanapin A."/>
            <person name="Katoh M."/>
            <person name="Kawasawa Y."/>
            <person name="Kelso J."/>
            <person name="Kitamura H."/>
            <person name="Kitano H."/>
            <person name="Kollias G."/>
            <person name="Krishnan S.P."/>
            <person name="Kruger A."/>
            <person name="Kummerfeld S.K."/>
            <person name="Kurochkin I.V."/>
            <person name="Lareau L.F."/>
            <person name="Lazarevic D."/>
            <person name="Lipovich L."/>
            <person name="Liu J."/>
            <person name="Liuni S."/>
            <person name="McWilliam S."/>
            <person name="Madan Babu M."/>
            <person name="Madera M."/>
            <person name="Marchionni L."/>
            <person name="Matsuda H."/>
            <person name="Matsuzawa S."/>
            <person name="Miki H."/>
            <person name="Mignone F."/>
            <person name="Miyake S."/>
            <person name="Morris K."/>
            <person name="Mottagui-Tabar S."/>
            <person name="Mulder N."/>
            <person name="Nakano N."/>
            <person name="Nakauchi H."/>
            <person name="Ng P."/>
            <person name="Nilsson R."/>
            <person name="Nishiguchi S."/>
            <person name="Nishikawa S."/>
            <person name="Nori F."/>
            <person name="Ohara O."/>
            <person name="Okazaki Y."/>
            <person name="Orlando V."/>
            <person name="Pang K.C."/>
            <person name="Pavan W.J."/>
            <person name="Pavesi G."/>
            <person name="Pesole G."/>
            <person name="Petrovsky N."/>
            <person name="Piazza S."/>
            <person name="Reed J."/>
            <person name="Reid J.F."/>
            <person name="Ring B.Z."/>
            <person name="Ringwald M."/>
            <person name="Rost B."/>
            <person name="Ruan Y."/>
            <person name="Salzberg S.L."/>
            <person name="Sandelin A."/>
            <person name="Schneider C."/>
            <person name="Schoenbach C."/>
            <person name="Sekiguchi K."/>
            <person name="Semple C.A."/>
            <person name="Seno S."/>
            <person name="Sessa L."/>
            <person name="Sheng Y."/>
            <person name="Shibata Y."/>
            <person name="Shimada H."/>
            <person name="Shimada K."/>
            <person name="Silva D."/>
            <person name="Sinclair B."/>
            <person name="Sperling S."/>
            <person name="Stupka E."/>
            <person name="Sugiura K."/>
            <person name="Sultana R."/>
            <person name="Takenaka Y."/>
            <person name="Taki K."/>
            <person name="Tammoja K."/>
            <person name="Tan S.L."/>
            <person name="Tang S."/>
            <person name="Taylor M.S."/>
            <person name="Tegner J."/>
            <person name="Teichmann S.A."/>
            <person name="Ueda H.R."/>
            <person name="van Nimwegen E."/>
            <person name="Verardo R."/>
            <person name="Wei C.L."/>
            <person name="Yagi K."/>
            <person name="Yamanishi H."/>
            <person name="Zabarovsky E."/>
            <person name="Zhu S."/>
            <person name="Zimmer A."/>
            <person name="Hide W."/>
            <person name="Bult C."/>
            <person name="Grimmond S.M."/>
            <person name="Teasdale R.D."/>
            <person name="Liu E.T."/>
            <person name="Brusic V."/>
            <person name="Quackenbush J."/>
            <person name="Wahlestedt C."/>
            <person name="Mattick J.S."/>
            <person name="Hume D.A."/>
            <person name="Kai C."/>
            <person name="Sasaki D."/>
            <person name="Tomaru Y."/>
            <person name="Fukuda S."/>
            <person name="Kanamori-Katayama M."/>
            <person name="Suzuki M."/>
            <person name="Aoki J."/>
            <person name="Arakawa T."/>
            <person name="Iida J."/>
            <person name="Imamura K."/>
            <person name="Itoh M."/>
            <person name="Kato T."/>
            <person name="Kawaji H."/>
            <person name="Kawagashira N."/>
            <person name="Kawashima T."/>
            <person name="Kojima M."/>
            <person name="Kondo S."/>
            <person name="Konno H."/>
            <person name="Nakano K."/>
            <person name="Ninomiya N."/>
            <person name="Nishio T."/>
            <person name="Okada M."/>
            <person name="Plessy C."/>
            <person name="Shibata K."/>
            <person name="Shiraki T."/>
            <person name="Suzuki S."/>
            <person name="Tagami M."/>
            <person name="Waki K."/>
            <person name="Watahiki A."/>
            <person name="Okamura-Oho Y."/>
            <person name="Suzuki H."/>
            <person name="Kawai J."/>
            <person name="Hayashizaki Y."/>
        </authorList>
    </citation>
    <scope>NUCLEOTIDE SEQUENCE [LARGE SCALE MRNA]</scope>
    <source>
        <strain>C57BL/6J</strain>
        <tissue>Hypothalamus</tissue>
        <tissue>Urinary bladder</tissue>
        <tissue>Vagina</tissue>
    </source>
</reference>
<keyword id="KW-1003">Cell membrane</keyword>
<keyword id="KW-0165">Cleavage on pair of basic residues</keyword>
<keyword id="KW-1015">Disulfide bond</keyword>
<keyword id="KW-0301">Gamma-carboxyglutamic acid</keyword>
<keyword id="KW-0472">Membrane</keyword>
<keyword id="KW-0597">Phosphoprotein</keyword>
<keyword id="KW-1185">Reference proteome</keyword>
<keyword id="KW-0732">Signal</keyword>
<keyword id="KW-0812">Transmembrane</keyword>
<keyword id="KW-1133">Transmembrane helix</keyword>